<evidence type="ECO:0000255" key="1">
    <source>
        <dbReference type="HAMAP-Rule" id="MF_00075"/>
    </source>
</evidence>
<reference key="1">
    <citation type="journal article" date="2001" name="Lancet">
        <title>Whole genome sequencing of meticillin-resistant Staphylococcus aureus.</title>
        <authorList>
            <person name="Kuroda M."/>
            <person name="Ohta T."/>
            <person name="Uchiyama I."/>
            <person name="Baba T."/>
            <person name="Yuzawa H."/>
            <person name="Kobayashi I."/>
            <person name="Cui L."/>
            <person name="Oguchi A."/>
            <person name="Aoki K."/>
            <person name="Nagai Y."/>
            <person name="Lian J.-Q."/>
            <person name="Ito T."/>
            <person name="Kanamori M."/>
            <person name="Matsumaru H."/>
            <person name="Maruyama A."/>
            <person name="Murakami H."/>
            <person name="Hosoyama A."/>
            <person name="Mizutani-Ui Y."/>
            <person name="Takahashi N.K."/>
            <person name="Sawano T."/>
            <person name="Inoue R."/>
            <person name="Kaito C."/>
            <person name="Sekimizu K."/>
            <person name="Hirakawa H."/>
            <person name="Kuhara S."/>
            <person name="Goto S."/>
            <person name="Yabuzaki J."/>
            <person name="Kanehisa M."/>
            <person name="Yamashita A."/>
            <person name="Oshima K."/>
            <person name="Furuya K."/>
            <person name="Yoshino C."/>
            <person name="Shiba T."/>
            <person name="Hattori M."/>
            <person name="Ogasawara N."/>
            <person name="Hayashi H."/>
            <person name="Hiramatsu K."/>
        </authorList>
    </citation>
    <scope>NUCLEOTIDE SEQUENCE [LARGE SCALE GENOMIC DNA]</scope>
    <source>
        <strain>N315</strain>
    </source>
</reference>
<reference key="2">
    <citation type="submission" date="2007-10" db="UniProtKB">
        <title>Shotgun proteomic analysis of total and membrane protein extracts of S. aureus strain N315.</title>
        <authorList>
            <person name="Vaezzadeh A.R."/>
            <person name="Deshusses J."/>
            <person name="Lescuyer P."/>
            <person name="Hochstrasser D.F."/>
        </authorList>
    </citation>
    <scope>IDENTIFICATION BY MASS SPECTROMETRY [LARGE SCALE ANALYSIS]</scope>
    <source>
        <strain>N315</strain>
    </source>
</reference>
<sequence length="72" mass="8280">MAKQDVIELEGTVLDTLPNAMFKVELENGHEILAHVSGKIRMNYIRILPGDKVTVEMSPYDLTRGRITYRYK</sequence>
<name>IF1_STAAN</name>
<protein>
    <recommendedName>
        <fullName evidence="1">Translation initiation factor IF-1</fullName>
    </recommendedName>
</protein>
<organism>
    <name type="scientific">Staphylococcus aureus (strain N315)</name>
    <dbReference type="NCBI Taxonomy" id="158879"/>
    <lineage>
        <taxon>Bacteria</taxon>
        <taxon>Bacillati</taxon>
        <taxon>Bacillota</taxon>
        <taxon>Bacilli</taxon>
        <taxon>Bacillales</taxon>
        <taxon>Staphylococcaceae</taxon>
        <taxon>Staphylococcus</taxon>
    </lineage>
</organism>
<dbReference type="EMBL" id="BA000018">
    <property type="protein sequence ID" value="BAB43320.1"/>
    <property type="molecule type" value="Genomic_DNA"/>
</dbReference>
<dbReference type="PIR" id="G90019">
    <property type="entry name" value="G90019"/>
</dbReference>
<dbReference type="RefSeq" id="WP_001118443.1">
    <property type="nucleotide sequence ID" value="NC_002745.2"/>
</dbReference>
<dbReference type="SMR" id="P65119"/>
<dbReference type="EnsemblBacteria" id="BAB43320">
    <property type="protein sequence ID" value="BAB43320"/>
    <property type="gene ID" value="BAB43320"/>
</dbReference>
<dbReference type="GeneID" id="98346540"/>
<dbReference type="KEGG" id="sau:SA2026"/>
<dbReference type="HOGENOM" id="CLU_151267_1_0_9"/>
<dbReference type="GO" id="GO:0005829">
    <property type="term" value="C:cytosol"/>
    <property type="evidence" value="ECO:0007669"/>
    <property type="project" value="TreeGrafter"/>
</dbReference>
<dbReference type="GO" id="GO:0043022">
    <property type="term" value="F:ribosome binding"/>
    <property type="evidence" value="ECO:0007669"/>
    <property type="project" value="UniProtKB-UniRule"/>
</dbReference>
<dbReference type="GO" id="GO:0019843">
    <property type="term" value="F:rRNA binding"/>
    <property type="evidence" value="ECO:0007669"/>
    <property type="project" value="UniProtKB-UniRule"/>
</dbReference>
<dbReference type="GO" id="GO:0003743">
    <property type="term" value="F:translation initiation factor activity"/>
    <property type="evidence" value="ECO:0007669"/>
    <property type="project" value="UniProtKB-UniRule"/>
</dbReference>
<dbReference type="CDD" id="cd04451">
    <property type="entry name" value="S1_IF1"/>
    <property type="match status" value="1"/>
</dbReference>
<dbReference type="FunFam" id="2.40.50.140:FF:000002">
    <property type="entry name" value="Translation initiation factor IF-1"/>
    <property type="match status" value="1"/>
</dbReference>
<dbReference type="Gene3D" id="2.40.50.140">
    <property type="entry name" value="Nucleic acid-binding proteins"/>
    <property type="match status" value="1"/>
</dbReference>
<dbReference type="HAMAP" id="MF_00075">
    <property type="entry name" value="IF_1"/>
    <property type="match status" value="1"/>
</dbReference>
<dbReference type="InterPro" id="IPR012340">
    <property type="entry name" value="NA-bd_OB-fold"/>
</dbReference>
<dbReference type="InterPro" id="IPR006196">
    <property type="entry name" value="RNA-binding_domain_S1_IF1"/>
</dbReference>
<dbReference type="InterPro" id="IPR003029">
    <property type="entry name" value="S1_domain"/>
</dbReference>
<dbReference type="InterPro" id="IPR004368">
    <property type="entry name" value="TIF_IF1"/>
</dbReference>
<dbReference type="NCBIfam" id="TIGR00008">
    <property type="entry name" value="infA"/>
    <property type="match status" value="1"/>
</dbReference>
<dbReference type="PANTHER" id="PTHR33370">
    <property type="entry name" value="TRANSLATION INITIATION FACTOR IF-1, CHLOROPLASTIC"/>
    <property type="match status" value="1"/>
</dbReference>
<dbReference type="PANTHER" id="PTHR33370:SF1">
    <property type="entry name" value="TRANSLATION INITIATION FACTOR IF-1, CHLOROPLASTIC"/>
    <property type="match status" value="1"/>
</dbReference>
<dbReference type="Pfam" id="PF01176">
    <property type="entry name" value="eIF-1a"/>
    <property type="match status" value="1"/>
</dbReference>
<dbReference type="SMART" id="SM00316">
    <property type="entry name" value="S1"/>
    <property type="match status" value="1"/>
</dbReference>
<dbReference type="SUPFAM" id="SSF50249">
    <property type="entry name" value="Nucleic acid-binding proteins"/>
    <property type="match status" value="1"/>
</dbReference>
<dbReference type="PROSITE" id="PS50832">
    <property type="entry name" value="S1_IF1_TYPE"/>
    <property type="match status" value="1"/>
</dbReference>
<keyword id="KW-0963">Cytoplasm</keyword>
<keyword id="KW-0396">Initiation factor</keyword>
<keyword id="KW-0648">Protein biosynthesis</keyword>
<keyword id="KW-0694">RNA-binding</keyword>
<keyword id="KW-0699">rRNA-binding</keyword>
<feature type="chain" id="PRO_0000095867" description="Translation initiation factor IF-1">
    <location>
        <begin position="1"/>
        <end position="72"/>
    </location>
</feature>
<feature type="domain" description="S1-like" evidence="1">
    <location>
        <begin position="1"/>
        <end position="72"/>
    </location>
</feature>
<proteinExistence type="evidence at protein level"/>
<accession>P65119</accession>
<accession>Q99S41</accession>
<gene>
    <name evidence="1" type="primary">infA</name>
    <name type="ordered locus">SA2026</name>
</gene>
<comment type="function">
    <text evidence="1">One of the essential components for the initiation of protein synthesis. Stabilizes the binding of IF-2 and IF-3 on the 30S subunit to which N-formylmethionyl-tRNA(fMet) subsequently binds. Helps modulate mRNA selection, yielding the 30S pre-initiation complex (PIC). Upon addition of the 50S ribosomal subunit IF-1, IF-2 and IF-3 are released leaving the mature 70S translation initiation complex.</text>
</comment>
<comment type="subunit">
    <text evidence="1">Component of the 30S ribosomal translation pre-initiation complex which assembles on the 30S ribosome in the order IF-2 and IF-3, IF-1 and N-formylmethionyl-tRNA(fMet); mRNA recruitment can occur at any time during PIC assembly.</text>
</comment>
<comment type="subcellular location">
    <subcellularLocation>
        <location evidence="1">Cytoplasm</location>
    </subcellularLocation>
</comment>
<comment type="similarity">
    <text evidence="1">Belongs to the IF-1 family.</text>
</comment>